<comment type="subunit">
    <text evidence="1">Homodimer.</text>
</comment>
<comment type="similarity">
    <text evidence="1">Belongs to the UPF0210 family.</text>
</comment>
<evidence type="ECO:0000255" key="1">
    <source>
        <dbReference type="HAMAP-Rule" id="MF_01221"/>
    </source>
</evidence>
<accession>C1CAP1</accession>
<feature type="chain" id="PRO_1000164868" description="UPF0210 protein SP70585_0294">
    <location>
        <begin position="1"/>
        <end position="445"/>
    </location>
</feature>
<dbReference type="EMBL" id="CP000918">
    <property type="protein sequence ID" value="ACO16074.1"/>
    <property type="molecule type" value="Genomic_DNA"/>
</dbReference>
<dbReference type="RefSeq" id="WP_000354904.1">
    <property type="nucleotide sequence ID" value="NC_012468.1"/>
</dbReference>
<dbReference type="SMR" id="C1CAP1"/>
<dbReference type="KEGG" id="snm:SP70585_0294"/>
<dbReference type="HOGENOM" id="CLU_048704_0_0_9"/>
<dbReference type="Proteomes" id="UP000002211">
    <property type="component" value="Chromosome"/>
</dbReference>
<dbReference type="CDD" id="cd08025">
    <property type="entry name" value="RNR_PFL_like_DUF711"/>
    <property type="match status" value="1"/>
</dbReference>
<dbReference type="Gene3D" id="3.20.70.20">
    <property type="match status" value="1"/>
</dbReference>
<dbReference type="HAMAP" id="MF_01221">
    <property type="entry name" value="UPF0210"/>
    <property type="match status" value="1"/>
</dbReference>
<dbReference type="InterPro" id="IPR007841">
    <property type="entry name" value="UPF0210"/>
</dbReference>
<dbReference type="NCBIfam" id="NF003700">
    <property type="entry name" value="PRK05313.1"/>
    <property type="match status" value="1"/>
</dbReference>
<dbReference type="PANTHER" id="PTHR37560:SF1">
    <property type="entry name" value="UPF0210 PROTEIN MJ1665"/>
    <property type="match status" value="1"/>
</dbReference>
<dbReference type="PANTHER" id="PTHR37560">
    <property type="entry name" value="UPF0210 PROTEIN SPR0218"/>
    <property type="match status" value="1"/>
</dbReference>
<dbReference type="Pfam" id="PF05167">
    <property type="entry name" value="DUF711"/>
    <property type="match status" value="1"/>
</dbReference>
<dbReference type="SUPFAM" id="SSF51998">
    <property type="entry name" value="PFL-like glycyl radical enzymes"/>
    <property type="match status" value="1"/>
</dbReference>
<name>Y294_STRP7</name>
<sequence length="445" mass="46384">MDIRQVTETIAMIEEQNFDIRTITMGISLLDCIDPDINRAAEKIYQKITTKAANLVAVGDEIAAELGIPIVNKRVSVTPISLIGAATDATDYVVLAKALDKAAKEIGVDFIGGFSALVQKGYQKGDEILINSIPRALTETDKVCSSVNIGSTKSGINMTAVADMGRIIKETANLSDMGAAKLVVFANAVEDNPFMAGAFHGVGEADVIINVGVSGPGVVKRALEKVRGQSFDVVAETVKKTAFKITRIGQLVGQMASERLGVEFGIVDLSLAPTPAVGDSVARVLEEMGLETVGTHGTTAALALLNDQVKKGGVMACNQVGGLSGAFIPVSEDEGMIAAVQNGSLNLEKLEAMTAICSVGLDMIAIPEDTPAETIAAMIADEAAIGVINMKTTAVRIIPKGREGDMIEFGGLLGTAPVMKVNGASSVDFISRGGQIPAPIHSFKN</sequence>
<reference key="1">
    <citation type="journal article" date="2010" name="Genome Biol.">
        <title>Structure and dynamics of the pan-genome of Streptococcus pneumoniae and closely related species.</title>
        <authorList>
            <person name="Donati C."/>
            <person name="Hiller N.L."/>
            <person name="Tettelin H."/>
            <person name="Muzzi A."/>
            <person name="Croucher N.J."/>
            <person name="Angiuoli S.V."/>
            <person name="Oggioni M."/>
            <person name="Dunning Hotopp J.C."/>
            <person name="Hu F.Z."/>
            <person name="Riley D.R."/>
            <person name="Covacci A."/>
            <person name="Mitchell T.J."/>
            <person name="Bentley S.D."/>
            <person name="Kilian M."/>
            <person name="Ehrlich G.D."/>
            <person name="Rappuoli R."/>
            <person name="Moxon E.R."/>
            <person name="Masignani V."/>
        </authorList>
    </citation>
    <scope>NUCLEOTIDE SEQUENCE [LARGE SCALE GENOMIC DNA]</scope>
    <source>
        <strain>70585</strain>
    </source>
</reference>
<organism>
    <name type="scientific">Streptococcus pneumoniae (strain 70585)</name>
    <dbReference type="NCBI Taxonomy" id="488221"/>
    <lineage>
        <taxon>Bacteria</taxon>
        <taxon>Bacillati</taxon>
        <taxon>Bacillota</taxon>
        <taxon>Bacilli</taxon>
        <taxon>Lactobacillales</taxon>
        <taxon>Streptococcaceae</taxon>
        <taxon>Streptococcus</taxon>
    </lineage>
</organism>
<gene>
    <name type="ordered locus">SP70585_0294</name>
</gene>
<proteinExistence type="inferred from homology"/>
<protein>
    <recommendedName>
        <fullName evidence="1">UPF0210 protein SP70585_0294</fullName>
    </recommendedName>
</protein>